<comment type="function">
    <text evidence="1">Putative transporter.</text>
</comment>
<comment type="subcellular location">
    <subcellularLocation>
        <location evidence="3">Membrane</location>
        <topology evidence="3">Multi-pass membrane protein</topology>
    </subcellularLocation>
</comment>
<comment type="similarity">
    <text evidence="3">Belongs to the TPT transporter family. SLC35E subfamily.</text>
</comment>
<proteinExistence type="evidence at transcript level"/>
<gene>
    <name type="primary">SLC35E3</name>
</gene>
<accession>A4IFK2</accession>
<protein>
    <recommendedName>
        <fullName>Solute carrier family 35 member E3</fullName>
    </recommendedName>
</protein>
<evidence type="ECO:0000250" key="1"/>
<evidence type="ECO:0000255" key="2"/>
<evidence type="ECO:0000305" key="3"/>
<organism>
    <name type="scientific">Bos taurus</name>
    <name type="common">Bovine</name>
    <dbReference type="NCBI Taxonomy" id="9913"/>
    <lineage>
        <taxon>Eukaryota</taxon>
        <taxon>Metazoa</taxon>
        <taxon>Chordata</taxon>
        <taxon>Craniata</taxon>
        <taxon>Vertebrata</taxon>
        <taxon>Euteleostomi</taxon>
        <taxon>Mammalia</taxon>
        <taxon>Eutheria</taxon>
        <taxon>Laurasiatheria</taxon>
        <taxon>Artiodactyla</taxon>
        <taxon>Ruminantia</taxon>
        <taxon>Pecora</taxon>
        <taxon>Bovidae</taxon>
        <taxon>Bovinae</taxon>
        <taxon>Bos</taxon>
    </lineage>
</organism>
<dbReference type="EMBL" id="BC134617">
    <property type="protein sequence ID" value="AAI34618.1"/>
    <property type="molecule type" value="mRNA"/>
</dbReference>
<dbReference type="RefSeq" id="NP_001077123.1">
    <property type="nucleotide sequence ID" value="NM_001083654.1"/>
</dbReference>
<dbReference type="SMR" id="A4IFK2"/>
<dbReference type="FunCoup" id="A4IFK2">
    <property type="interactions" value="2378"/>
</dbReference>
<dbReference type="STRING" id="9913.ENSBTAP00000042665"/>
<dbReference type="PaxDb" id="9913-ENSBTAP00000042665"/>
<dbReference type="Ensembl" id="ENSBTAT00000045262.3">
    <property type="protein sequence ID" value="ENSBTAP00000042665.2"/>
    <property type="gene ID" value="ENSBTAG00000031919.4"/>
</dbReference>
<dbReference type="GeneID" id="509009"/>
<dbReference type="KEGG" id="bta:509009"/>
<dbReference type="CTD" id="55508"/>
<dbReference type="VEuPathDB" id="HostDB:ENSBTAG00000031919"/>
<dbReference type="VGNC" id="VGNC:34831">
    <property type="gene designation" value="SLC35E3"/>
</dbReference>
<dbReference type="eggNOG" id="KOG1441">
    <property type="taxonomic scope" value="Eukaryota"/>
</dbReference>
<dbReference type="GeneTree" id="ENSGT00730000111164"/>
<dbReference type="HOGENOM" id="CLU_048347_3_2_1"/>
<dbReference type="InParanoid" id="A4IFK2"/>
<dbReference type="OMA" id="WMVVNTL"/>
<dbReference type="OrthoDB" id="5547497at2759"/>
<dbReference type="TreeFam" id="TF329429"/>
<dbReference type="Proteomes" id="UP000009136">
    <property type="component" value="Chromosome 5"/>
</dbReference>
<dbReference type="Bgee" id="ENSBTAG00000031919">
    <property type="expression patterns" value="Expressed in oocyte and 105 other cell types or tissues"/>
</dbReference>
<dbReference type="GO" id="GO:0005794">
    <property type="term" value="C:Golgi apparatus"/>
    <property type="evidence" value="ECO:0000318"/>
    <property type="project" value="GO_Central"/>
</dbReference>
<dbReference type="GO" id="GO:0016020">
    <property type="term" value="C:membrane"/>
    <property type="evidence" value="ECO:0007669"/>
    <property type="project" value="UniProtKB-SubCell"/>
</dbReference>
<dbReference type="GO" id="GO:0015297">
    <property type="term" value="F:antiporter activity"/>
    <property type="evidence" value="ECO:0000318"/>
    <property type="project" value="GO_Central"/>
</dbReference>
<dbReference type="GO" id="GO:0005338">
    <property type="term" value="F:nucleotide-sugar transmembrane transporter activity"/>
    <property type="evidence" value="ECO:0000318"/>
    <property type="project" value="GO_Central"/>
</dbReference>
<dbReference type="GO" id="GO:0055085">
    <property type="term" value="P:transmembrane transport"/>
    <property type="evidence" value="ECO:0000318"/>
    <property type="project" value="GO_Central"/>
</dbReference>
<dbReference type="InterPro" id="IPR004853">
    <property type="entry name" value="Sugar_P_trans_dom"/>
</dbReference>
<dbReference type="InterPro" id="IPR050186">
    <property type="entry name" value="TPT_transporter"/>
</dbReference>
<dbReference type="PANTHER" id="PTHR11132">
    <property type="entry name" value="SOLUTE CARRIER FAMILY 35"/>
    <property type="match status" value="1"/>
</dbReference>
<dbReference type="Pfam" id="PF03151">
    <property type="entry name" value="TPT"/>
    <property type="match status" value="1"/>
</dbReference>
<dbReference type="SUPFAM" id="SSF103481">
    <property type="entry name" value="Multidrug resistance efflux transporter EmrE"/>
    <property type="match status" value="1"/>
</dbReference>
<keyword id="KW-0472">Membrane</keyword>
<keyword id="KW-1185">Reference proteome</keyword>
<keyword id="KW-0812">Transmembrane</keyword>
<keyword id="KW-1133">Transmembrane helix</keyword>
<reference key="1">
    <citation type="submission" date="2007-03" db="EMBL/GenBank/DDBJ databases">
        <authorList>
            <consortium name="NIH - Mammalian Gene Collection (MGC) project"/>
        </authorList>
    </citation>
    <scope>NUCLEOTIDE SEQUENCE [LARGE SCALE MRNA]</scope>
    <source>
        <strain>Hereford</strain>
        <tissue>Fetal skin</tissue>
    </source>
</reference>
<sequence length="313" mass="34766">MASLADRVRGNGRIAAGLLLNLLVSICIVFLNKWIYVHYGFPNMSLTLVHFVVTWLGLYVCQKLDIFAPKSLPPSKLLLLALSFCGFVVFTNLSLQNNTIGTYQLAKAMTTPVIIVIQTLCYKKTFSTKIRLTLIPITLGVILNSYYDVKFNFLGTVFAALGVLVTSLYQVWVGAKQHELQVNSMQLLYYQAPMSSAMLLVAVPFFEPVFAEGGIFGPWSVSALLMVLLSGVIAFMVNLSIYWIIGNTSPVTYNMFGHFKFCITLFGGYVLFKDPLSINQGLGMLCTLFGILAYTHFKLSEQEGSKSKLVQRP</sequence>
<feature type="chain" id="PRO_0000297898" description="Solute carrier family 35 member E3">
    <location>
        <begin position="1"/>
        <end position="313"/>
    </location>
</feature>
<feature type="transmembrane region" description="Helical" evidence="2">
    <location>
        <begin position="17"/>
        <end position="37"/>
    </location>
</feature>
<feature type="transmembrane region" description="Helical" evidence="2">
    <location>
        <begin position="40"/>
        <end position="60"/>
    </location>
</feature>
<feature type="transmembrane region" description="Helical" evidence="2">
    <location>
        <begin position="77"/>
        <end position="97"/>
    </location>
</feature>
<feature type="transmembrane region" description="Helical" evidence="2">
    <location>
        <begin position="100"/>
        <end position="120"/>
    </location>
</feature>
<feature type="transmembrane region" description="Helical" evidence="2">
    <location>
        <begin position="130"/>
        <end position="147"/>
    </location>
</feature>
<feature type="transmembrane region" description="Helical" evidence="2">
    <location>
        <begin position="153"/>
        <end position="173"/>
    </location>
</feature>
<feature type="transmembrane region" description="Helical" evidence="2">
    <location>
        <begin position="187"/>
        <end position="206"/>
    </location>
</feature>
<feature type="transmembrane region" description="Helical" evidence="2">
    <location>
        <begin position="225"/>
        <end position="245"/>
    </location>
</feature>
<feature type="transmembrane region" description="Helical" evidence="2">
    <location>
        <begin position="252"/>
        <end position="272"/>
    </location>
</feature>
<feature type="transmembrane region" description="Helical" evidence="2">
    <location>
        <begin position="275"/>
        <end position="295"/>
    </location>
</feature>
<name>S35E3_BOVIN</name>